<comment type="function">
    <text evidence="1">Component of the dark-operative protochlorophyllide reductase (DPOR) that uses Mg-ATP and reduced ferredoxin to reduce ring D of protochlorophyllide (Pchlide) to form chlorophyllide a (Chlide). This reaction is light-independent. The L component serves as a unique electron donor to the NB-component of the complex, and binds Mg-ATP.</text>
</comment>
<comment type="catalytic activity">
    <reaction evidence="1">
        <text>chlorophyllide a + oxidized 2[4Fe-4S]-[ferredoxin] + 2 ADP + 2 phosphate = protochlorophyllide a + reduced 2[4Fe-4S]-[ferredoxin] + 2 ATP + 2 H2O</text>
        <dbReference type="Rhea" id="RHEA:28202"/>
        <dbReference type="Rhea" id="RHEA-COMP:10002"/>
        <dbReference type="Rhea" id="RHEA-COMP:10004"/>
        <dbReference type="ChEBI" id="CHEBI:15377"/>
        <dbReference type="ChEBI" id="CHEBI:30616"/>
        <dbReference type="ChEBI" id="CHEBI:33722"/>
        <dbReference type="ChEBI" id="CHEBI:33723"/>
        <dbReference type="ChEBI" id="CHEBI:43474"/>
        <dbReference type="ChEBI" id="CHEBI:83348"/>
        <dbReference type="ChEBI" id="CHEBI:83350"/>
        <dbReference type="ChEBI" id="CHEBI:456216"/>
        <dbReference type="EC" id="1.3.7.7"/>
    </reaction>
</comment>
<comment type="cofactor">
    <cofactor evidence="1">
        <name>[4Fe-4S] cluster</name>
        <dbReference type="ChEBI" id="CHEBI:49883"/>
    </cofactor>
    <text evidence="1">Binds 1 [4Fe-4S] cluster per dimer.</text>
</comment>
<comment type="pathway">
    <text evidence="1">Porphyrin-containing compound metabolism; chlorophyll biosynthesis (light-independent).</text>
</comment>
<comment type="subunit">
    <text evidence="1">Homodimer. Protochlorophyllide reductase is composed of three subunits; ChlL, ChlN and ChlB.</text>
</comment>
<comment type="similarity">
    <text evidence="1">Belongs to the NifH/BchL/ChlL family.</text>
</comment>
<protein>
    <recommendedName>
        <fullName evidence="1">Light-independent protochlorophyllide reductase iron-sulfur ATP-binding protein</fullName>
        <shortName evidence="1">DPOR subunit L</shortName>
        <shortName evidence="1">LI-POR subunit L</shortName>
        <ecNumber evidence="1">1.3.7.7</ecNumber>
    </recommendedName>
</protein>
<organism>
    <name type="scientific">Synechococcus sp. (strain CC9605)</name>
    <dbReference type="NCBI Taxonomy" id="110662"/>
    <lineage>
        <taxon>Bacteria</taxon>
        <taxon>Bacillati</taxon>
        <taxon>Cyanobacteriota</taxon>
        <taxon>Cyanophyceae</taxon>
        <taxon>Synechococcales</taxon>
        <taxon>Synechococcaceae</taxon>
        <taxon>Synechococcus</taxon>
    </lineage>
</organism>
<keyword id="KW-0004">4Fe-4S</keyword>
<keyword id="KW-0067">ATP-binding</keyword>
<keyword id="KW-0149">Chlorophyll biosynthesis</keyword>
<keyword id="KW-0408">Iron</keyword>
<keyword id="KW-0411">Iron-sulfur</keyword>
<keyword id="KW-0460">Magnesium</keyword>
<keyword id="KW-0479">Metal-binding</keyword>
<keyword id="KW-0547">Nucleotide-binding</keyword>
<keyword id="KW-0560">Oxidoreductase</keyword>
<keyword id="KW-0602">Photosynthesis</keyword>
<sequence length="296" mass="32467">MTTILTRPADGEGSVQVHQDPALNIQEETLVIAVYGKGGIGKSTTSSNLSAAFSKLGKRVLQIGCDPKHDSTFTLTHKMVPTVIDILEEVDFHSEELRPEDFVFTGFNGVQCVESGGPPAGTGCGGYVTGQTVKLLKEHHLLEDTDVVIFDVLGDVVCGGFAAPLQHANYCLIVTANDFDSIFAMNRIVQAIQAKAKNYKVRLGGVVANRSADTDQIDKFNERTGLRTMAHFRDVDAIRRSRLKKCTIFEMDDADEAVQAVQNEYLRLAQNMLDKVEPLEATSLKDREIFDLLGFD</sequence>
<evidence type="ECO:0000255" key="1">
    <source>
        <dbReference type="HAMAP-Rule" id="MF_00355"/>
    </source>
</evidence>
<dbReference type="EC" id="1.3.7.7" evidence="1"/>
<dbReference type="EMBL" id="CP000110">
    <property type="protein sequence ID" value="ABB34513.1"/>
    <property type="molecule type" value="Genomic_DNA"/>
</dbReference>
<dbReference type="RefSeq" id="WP_011363740.1">
    <property type="nucleotide sequence ID" value="NC_007516.1"/>
</dbReference>
<dbReference type="SMR" id="Q3ALL9"/>
<dbReference type="STRING" id="110662.Syncc9605_0741"/>
<dbReference type="KEGG" id="syd:Syncc9605_0741"/>
<dbReference type="eggNOG" id="COG1348">
    <property type="taxonomic scope" value="Bacteria"/>
</dbReference>
<dbReference type="HOGENOM" id="CLU_059373_2_0_3"/>
<dbReference type="OrthoDB" id="9778641at2"/>
<dbReference type="UniPathway" id="UPA00670"/>
<dbReference type="GO" id="GO:0051539">
    <property type="term" value="F:4 iron, 4 sulfur cluster binding"/>
    <property type="evidence" value="ECO:0007669"/>
    <property type="project" value="UniProtKB-UniRule"/>
</dbReference>
<dbReference type="GO" id="GO:0005524">
    <property type="term" value="F:ATP binding"/>
    <property type="evidence" value="ECO:0007669"/>
    <property type="project" value="UniProtKB-UniRule"/>
</dbReference>
<dbReference type="GO" id="GO:0046872">
    <property type="term" value="F:metal ion binding"/>
    <property type="evidence" value="ECO:0007669"/>
    <property type="project" value="UniProtKB-KW"/>
</dbReference>
<dbReference type="GO" id="GO:0016730">
    <property type="term" value="F:oxidoreductase activity, acting on iron-sulfur proteins as donors"/>
    <property type="evidence" value="ECO:0007669"/>
    <property type="project" value="InterPro"/>
</dbReference>
<dbReference type="GO" id="GO:0016636">
    <property type="term" value="F:oxidoreductase activity, acting on the CH-CH group of donors, iron-sulfur protein as acceptor"/>
    <property type="evidence" value="ECO:0007669"/>
    <property type="project" value="UniProtKB-UniRule"/>
</dbReference>
<dbReference type="GO" id="GO:0036068">
    <property type="term" value="P:light-independent chlorophyll biosynthetic process"/>
    <property type="evidence" value="ECO:0007669"/>
    <property type="project" value="UniProtKB-UniRule"/>
</dbReference>
<dbReference type="GO" id="GO:0019685">
    <property type="term" value="P:photosynthesis, dark reaction"/>
    <property type="evidence" value="ECO:0007669"/>
    <property type="project" value="InterPro"/>
</dbReference>
<dbReference type="CDD" id="cd02032">
    <property type="entry name" value="Bchl-like"/>
    <property type="match status" value="1"/>
</dbReference>
<dbReference type="Gene3D" id="3.40.50.300">
    <property type="entry name" value="P-loop containing nucleotide triphosphate hydrolases"/>
    <property type="match status" value="1"/>
</dbReference>
<dbReference type="HAMAP" id="MF_00355">
    <property type="entry name" value="ChlL_BchL"/>
    <property type="match status" value="1"/>
</dbReference>
<dbReference type="InterPro" id="IPR030655">
    <property type="entry name" value="NifH/chlL_CS"/>
</dbReference>
<dbReference type="InterPro" id="IPR000392">
    <property type="entry name" value="NifH/frxC"/>
</dbReference>
<dbReference type="InterPro" id="IPR027417">
    <property type="entry name" value="P-loop_NTPase"/>
</dbReference>
<dbReference type="InterPro" id="IPR005971">
    <property type="entry name" value="Protochlorophyllide_ATP-bd"/>
</dbReference>
<dbReference type="NCBIfam" id="TIGR01281">
    <property type="entry name" value="DPOR_bchL"/>
    <property type="match status" value="1"/>
</dbReference>
<dbReference type="PANTHER" id="PTHR42864">
    <property type="entry name" value="LIGHT-INDEPENDENT PROTOCHLOROPHYLLIDE REDUCTASE IRON-SULFUR ATP-BINDING PROTEIN"/>
    <property type="match status" value="1"/>
</dbReference>
<dbReference type="PANTHER" id="PTHR42864:SF2">
    <property type="entry name" value="LIGHT-INDEPENDENT PROTOCHLOROPHYLLIDE REDUCTASE IRON-SULFUR ATP-BINDING PROTEIN"/>
    <property type="match status" value="1"/>
</dbReference>
<dbReference type="Pfam" id="PF00142">
    <property type="entry name" value="Fer4_NifH"/>
    <property type="match status" value="1"/>
</dbReference>
<dbReference type="PIRSF" id="PIRSF000363">
    <property type="entry name" value="Nitrogenase_iron"/>
    <property type="match status" value="1"/>
</dbReference>
<dbReference type="PRINTS" id="PR00091">
    <property type="entry name" value="NITROGNASEII"/>
</dbReference>
<dbReference type="SUPFAM" id="SSF52540">
    <property type="entry name" value="P-loop containing nucleoside triphosphate hydrolases"/>
    <property type="match status" value="1"/>
</dbReference>
<dbReference type="PROSITE" id="PS00746">
    <property type="entry name" value="NIFH_FRXC_1"/>
    <property type="match status" value="1"/>
</dbReference>
<dbReference type="PROSITE" id="PS00692">
    <property type="entry name" value="NIFH_FRXC_2"/>
    <property type="match status" value="1"/>
</dbReference>
<dbReference type="PROSITE" id="PS51026">
    <property type="entry name" value="NIFH_FRXC_3"/>
    <property type="match status" value="1"/>
</dbReference>
<feature type="chain" id="PRO_0000324076" description="Light-independent protochlorophyllide reductase iron-sulfur ATP-binding protein">
    <location>
        <begin position="1"/>
        <end position="296"/>
    </location>
</feature>
<feature type="binding site" evidence="1">
    <location>
        <begin position="39"/>
        <end position="44"/>
    </location>
    <ligand>
        <name>ATP</name>
        <dbReference type="ChEBI" id="CHEBI:30616"/>
    </ligand>
</feature>
<feature type="binding site" evidence="1">
    <location>
        <position position="43"/>
    </location>
    <ligand>
        <name>Mg(2+)</name>
        <dbReference type="ChEBI" id="CHEBI:18420"/>
    </ligand>
</feature>
<feature type="binding site" evidence="1">
    <location>
        <position position="68"/>
    </location>
    <ligand>
        <name>ATP</name>
        <dbReference type="ChEBI" id="CHEBI:30616"/>
    </ligand>
</feature>
<feature type="binding site" evidence="1">
    <location>
        <position position="124"/>
    </location>
    <ligand>
        <name>[4Fe-4S] cluster</name>
        <dbReference type="ChEBI" id="CHEBI:49883"/>
        <note>ligand shared between dimeric partners</note>
    </ligand>
</feature>
<feature type="binding site" evidence="1">
    <location>
        <position position="158"/>
    </location>
    <ligand>
        <name>[4Fe-4S] cluster</name>
        <dbReference type="ChEBI" id="CHEBI:49883"/>
        <note>ligand shared between dimeric partners</note>
    </ligand>
</feature>
<feature type="binding site" evidence="1">
    <location>
        <begin position="209"/>
        <end position="210"/>
    </location>
    <ligand>
        <name>ATP</name>
        <dbReference type="ChEBI" id="CHEBI:30616"/>
    </ligand>
</feature>
<proteinExistence type="inferred from homology"/>
<name>CHLL_SYNSC</name>
<accession>Q3ALL9</accession>
<gene>
    <name evidence="1" type="primary">chlL</name>
    <name type="ordered locus">Syncc9605_0741</name>
</gene>
<reference key="1">
    <citation type="submission" date="2005-07" db="EMBL/GenBank/DDBJ databases">
        <title>Complete sequence of Synechococcus sp. CC9605.</title>
        <authorList>
            <consortium name="US DOE Joint Genome Institute"/>
            <person name="Copeland A."/>
            <person name="Lucas S."/>
            <person name="Lapidus A."/>
            <person name="Barry K."/>
            <person name="Detter J.C."/>
            <person name="Glavina T."/>
            <person name="Hammon N."/>
            <person name="Israni S."/>
            <person name="Pitluck S."/>
            <person name="Schmutz J."/>
            <person name="Martinez M."/>
            <person name="Larimer F."/>
            <person name="Land M."/>
            <person name="Kyrpides N."/>
            <person name="Ivanova N."/>
            <person name="Richardson P."/>
        </authorList>
    </citation>
    <scope>NUCLEOTIDE SEQUENCE [LARGE SCALE GENOMIC DNA]</scope>
    <source>
        <strain>CC9605</strain>
    </source>
</reference>